<gene>
    <name evidence="1" type="primary">petG</name>
    <name type="ordered locus">CYB_2426</name>
</gene>
<sequence>MIEPILLGIVLGMVVVTLAGLFVAAYRQYQRSNKIGL</sequence>
<name>PETG_SYNJB</name>
<organism>
    <name type="scientific">Synechococcus sp. (strain JA-2-3B'a(2-13))</name>
    <name type="common">Cyanobacteria bacterium Yellowstone B-Prime</name>
    <dbReference type="NCBI Taxonomy" id="321332"/>
    <lineage>
        <taxon>Bacteria</taxon>
        <taxon>Bacillati</taxon>
        <taxon>Cyanobacteriota</taxon>
        <taxon>Cyanophyceae</taxon>
        <taxon>Synechococcales</taxon>
        <taxon>Synechococcaceae</taxon>
        <taxon>Synechococcus</taxon>
    </lineage>
</organism>
<feature type="chain" id="PRO_1000050397" description="Cytochrome b6-f complex subunit 5">
    <location>
        <begin position="1"/>
        <end position="37"/>
    </location>
</feature>
<feature type="transmembrane region" description="Helical" evidence="1">
    <location>
        <begin position="5"/>
        <end position="25"/>
    </location>
</feature>
<accession>Q2JJ29</accession>
<comment type="function">
    <text evidence="1">Component of the cytochrome b6-f complex, which mediates electron transfer between photosystem II (PSII) and photosystem I (PSI), cyclic electron flow around PSI, and state transitions. PetG is required for either the stability or assembly of the cytochrome b6-f complex.</text>
</comment>
<comment type="subunit">
    <text evidence="1">The 4 large subunits of the cytochrome b6-f complex are cytochrome b6, subunit IV (17 kDa polypeptide, PetD), cytochrome f and the Rieske protein, while the 4 small subunits are PetG, PetL, PetM and PetN. The complex functions as a dimer.</text>
</comment>
<comment type="subcellular location">
    <subcellularLocation>
        <location evidence="1">Cellular thylakoid membrane</location>
        <topology evidence="1">Single-pass membrane protein</topology>
    </subcellularLocation>
</comment>
<comment type="similarity">
    <text evidence="1">Belongs to the PetG family.</text>
</comment>
<proteinExistence type="inferred from homology"/>
<dbReference type="EMBL" id="CP000240">
    <property type="protein sequence ID" value="ABD03360.1"/>
    <property type="molecule type" value="Genomic_DNA"/>
</dbReference>
<dbReference type="RefSeq" id="WP_011433989.1">
    <property type="nucleotide sequence ID" value="NC_007776.1"/>
</dbReference>
<dbReference type="SMR" id="Q2JJ29"/>
<dbReference type="STRING" id="321332.CYB_2426"/>
<dbReference type="KEGG" id="cyb:CYB_2426"/>
<dbReference type="HOGENOM" id="CLU_216962_0_0_3"/>
<dbReference type="Proteomes" id="UP000001938">
    <property type="component" value="Chromosome"/>
</dbReference>
<dbReference type="GO" id="GO:0009512">
    <property type="term" value="C:cytochrome b6f complex"/>
    <property type="evidence" value="ECO:0007669"/>
    <property type="project" value="InterPro"/>
</dbReference>
<dbReference type="GO" id="GO:0031676">
    <property type="term" value="C:plasma membrane-derived thylakoid membrane"/>
    <property type="evidence" value="ECO:0007669"/>
    <property type="project" value="UniProtKB-SubCell"/>
</dbReference>
<dbReference type="GO" id="GO:0045158">
    <property type="term" value="F:electron transporter, transferring electrons within cytochrome b6/f complex of photosystem II activity"/>
    <property type="evidence" value="ECO:0007669"/>
    <property type="project" value="UniProtKB-UniRule"/>
</dbReference>
<dbReference type="GO" id="GO:0017004">
    <property type="term" value="P:cytochrome complex assembly"/>
    <property type="evidence" value="ECO:0007669"/>
    <property type="project" value="UniProtKB-UniRule"/>
</dbReference>
<dbReference type="GO" id="GO:0015979">
    <property type="term" value="P:photosynthesis"/>
    <property type="evidence" value="ECO:0007669"/>
    <property type="project" value="UniProtKB-KW"/>
</dbReference>
<dbReference type="HAMAP" id="MF_00432">
    <property type="entry name" value="Cytb6_f_PetG"/>
    <property type="match status" value="1"/>
</dbReference>
<dbReference type="InterPro" id="IPR003683">
    <property type="entry name" value="Cyt_6/f_cplx_su5"/>
</dbReference>
<dbReference type="InterPro" id="IPR036099">
    <property type="entry name" value="Cyt_6/f_cplx_su5_sf"/>
</dbReference>
<dbReference type="NCBIfam" id="NF001907">
    <property type="entry name" value="PRK00665.1"/>
    <property type="match status" value="1"/>
</dbReference>
<dbReference type="Pfam" id="PF02529">
    <property type="entry name" value="PetG"/>
    <property type="match status" value="1"/>
</dbReference>
<dbReference type="PIRSF" id="PIRSF000034">
    <property type="entry name" value="Cyt_b6-f_V"/>
    <property type="match status" value="1"/>
</dbReference>
<dbReference type="SUPFAM" id="SSF103446">
    <property type="entry name" value="PetG subunit of the cytochrome b6f complex"/>
    <property type="match status" value="1"/>
</dbReference>
<keyword id="KW-0249">Electron transport</keyword>
<keyword id="KW-0472">Membrane</keyword>
<keyword id="KW-0602">Photosynthesis</keyword>
<keyword id="KW-1185">Reference proteome</keyword>
<keyword id="KW-0793">Thylakoid</keyword>
<keyword id="KW-0812">Transmembrane</keyword>
<keyword id="KW-1133">Transmembrane helix</keyword>
<keyword id="KW-0813">Transport</keyword>
<evidence type="ECO:0000255" key="1">
    <source>
        <dbReference type="HAMAP-Rule" id="MF_00432"/>
    </source>
</evidence>
<protein>
    <recommendedName>
        <fullName evidence="1">Cytochrome b6-f complex subunit 5</fullName>
    </recommendedName>
    <alternativeName>
        <fullName evidence="1">Cytochrome b6-f complex subunit PetG</fullName>
    </alternativeName>
    <alternativeName>
        <fullName evidence="1">Cytochrome b6-f complex subunit V</fullName>
    </alternativeName>
</protein>
<reference key="1">
    <citation type="journal article" date="2007" name="ISME J.">
        <title>Population level functional diversity in a microbial community revealed by comparative genomic and metagenomic analyses.</title>
        <authorList>
            <person name="Bhaya D."/>
            <person name="Grossman A.R."/>
            <person name="Steunou A.-S."/>
            <person name="Khuri N."/>
            <person name="Cohan F.M."/>
            <person name="Hamamura N."/>
            <person name="Melendrez M.C."/>
            <person name="Bateson M.M."/>
            <person name="Ward D.M."/>
            <person name="Heidelberg J.F."/>
        </authorList>
    </citation>
    <scope>NUCLEOTIDE SEQUENCE [LARGE SCALE GENOMIC DNA]</scope>
    <source>
        <strain>JA-2-3B'a(2-13)</strain>
    </source>
</reference>